<reference key="1">
    <citation type="submission" date="2007-08" db="EMBL/GenBank/DDBJ databases">
        <title>Complete sequence of Thermotoga lettingae TMO.</title>
        <authorList>
            <consortium name="US DOE Joint Genome Institute"/>
            <person name="Copeland A."/>
            <person name="Lucas S."/>
            <person name="Lapidus A."/>
            <person name="Barry K."/>
            <person name="Glavina del Rio T."/>
            <person name="Dalin E."/>
            <person name="Tice H."/>
            <person name="Pitluck S."/>
            <person name="Foster B."/>
            <person name="Bruce D."/>
            <person name="Schmutz J."/>
            <person name="Larimer F."/>
            <person name="Land M."/>
            <person name="Hauser L."/>
            <person name="Kyrpides N."/>
            <person name="Mikhailova N."/>
            <person name="Nelson K."/>
            <person name="Gogarten J.P."/>
            <person name="Noll K."/>
            <person name="Richardson P."/>
        </authorList>
    </citation>
    <scope>NUCLEOTIDE SEQUENCE [LARGE SCALE GENOMIC DNA]</scope>
    <source>
        <strain>ATCC BAA-301 / DSM 14385 / NBRC 107922 / TMO</strain>
    </source>
</reference>
<feature type="chain" id="PRO_1000057331" description="D-alanine--D-alanine ligase">
    <location>
        <begin position="1"/>
        <end position="296"/>
    </location>
</feature>
<feature type="domain" description="ATP-grasp" evidence="2">
    <location>
        <begin position="99"/>
        <end position="292"/>
    </location>
</feature>
<feature type="binding site" evidence="2">
    <location>
        <begin position="125"/>
        <end position="176"/>
    </location>
    <ligand>
        <name>ATP</name>
        <dbReference type="ChEBI" id="CHEBI:30616"/>
    </ligand>
</feature>
<feature type="binding site" evidence="2">
    <location>
        <position position="247"/>
    </location>
    <ligand>
        <name>Mg(2+)</name>
        <dbReference type="ChEBI" id="CHEBI:18420"/>
        <label>1</label>
    </ligand>
</feature>
<feature type="binding site" evidence="2">
    <location>
        <position position="259"/>
    </location>
    <ligand>
        <name>Mg(2+)</name>
        <dbReference type="ChEBI" id="CHEBI:18420"/>
        <label>1</label>
    </ligand>
</feature>
<feature type="binding site" evidence="2">
    <location>
        <position position="259"/>
    </location>
    <ligand>
        <name>Mg(2+)</name>
        <dbReference type="ChEBI" id="CHEBI:18420"/>
        <label>2</label>
    </ligand>
</feature>
<feature type="binding site" evidence="2">
    <location>
        <position position="261"/>
    </location>
    <ligand>
        <name>Mg(2+)</name>
        <dbReference type="ChEBI" id="CHEBI:18420"/>
        <label>2</label>
    </ligand>
</feature>
<comment type="function">
    <text evidence="2">Cell wall formation.</text>
</comment>
<comment type="catalytic activity">
    <reaction evidence="2">
        <text>2 D-alanine + ATP = D-alanyl-D-alanine + ADP + phosphate + H(+)</text>
        <dbReference type="Rhea" id="RHEA:11224"/>
        <dbReference type="ChEBI" id="CHEBI:15378"/>
        <dbReference type="ChEBI" id="CHEBI:30616"/>
        <dbReference type="ChEBI" id="CHEBI:43474"/>
        <dbReference type="ChEBI" id="CHEBI:57416"/>
        <dbReference type="ChEBI" id="CHEBI:57822"/>
        <dbReference type="ChEBI" id="CHEBI:456216"/>
        <dbReference type="EC" id="6.3.2.4"/>
    </reaction>
</comment>
<comment type="cofactor">
    <cofactor evidence="1">
        <name>Mg(2+)</name>
        <dbReference type="ChEBI" id="CHEBI:18420"/>
    </cofactor>
    <cofactor evidence="1">
        <name>Mn(2+)</name>
        <dbReference type="ChEBI" id="CHEBI:29035"/>
    </cofactor>
    <text evidence="1">Binds 2 magnesium or manganese ions per subunit.</text>
</comment>
<comment type="pathway">
    <text evidence="2">Cell wall biogenesis; peptidoglycan biosynthesis.</text>
</comment>
<comment type="subcellular location">
    <subcellularLocation>
        <location evidence="2">Cytoplasm</location>
    </subcellularLocation>
</comment>
<comment type="similarity">
    <text evidence="2">Belongs to the D-alanine--D-alanine ligase family.</text>
</comment>
<keyword id="KW-0067">ATP-binding</keyword>
<keyword id="KW-0133">Cell shape</keyword>
<keyword id="KW-0961">Cell wall biogenesis/degradation</keyword>
<keyword id="KW-0963">Cytoplasm</keyword>
<keyword id="KW-0436">Ligase</keyword>
<keyword id="KW-0460">Magnesium</keyword>
<keyword id="KW-0464">Manganese</keyword>
<keyword id="KW-0479">Metal-binding</keyword>
<keyword id="KW-0547">Nucleotide-binding</keyword>
<keyword id="KW-0573">Peptidoglycan synthesis</keyword>
<keyword id="KW-1185">Reference proteome</keyword>
<proteinExistence type="inferred from homology"/>
<name>DDL_PSELT</name>
<protein>
    <recommendedName>
        <fullName evidence="2">D-alanine--D-alanine ligase</fullName>
        <ecNumber evidence="2">6.3.2.4</ecNumber>
    </recommendedName>
    <alternativeName>
        <fullName evidence="2">D-Ala-D-Ala ligase</fullName>
    </alternativeName>
    <alternativeName>
        <fullName evidence="2">D-alanylalanine synthetase</fullName>
    </alternativeName>
</protein>
<accession>A8F8C8</accession>
<gene>
    <name evidence="2" type="primary">ddl</name>
    <name type="ordered locus">Tlet_1858</name>
</gene>
<organism>
    <name type="scientific">Pseudothermotoga lettingae (strain ATCC BAA-301 / DSM 14385 / NBRC 107922 / TMO)</name>
    <name type="common">Thermotoga lettingae</name>
    <dbReference type="NCBI Taxonomy" id="416591"/>
    <lineage>
        <taxon>Bacteria</taxon>
        <taxon>Thermotogati</taxon>
        <taxon>Thermotogota</taxon>
        <taxon>Thermotogae</taxon>
        <taxon>Thermotogales</taxon>
        <taxon>Thermotogaceae</taxon>
        <taxon>Pseudothermotoga</taxon>
    </lineage>
</organism>
<dbReference type="EC" id="6.3.2.4" evidence="2"/>
<dbReference type="EMBL" id="CP000812">
    <property type="protein sequence ID" value="ABV34412.1"/>
    <property type="molecule type" value="Genomic_DNA"/>
</dbReference>
<dbReference type="RefSeq" id="WP_012003888.1">
    <property type="nucleotide sequence ID" value="NZ_BSDV01000001.1"/>
</dbReference>
<dbReference type="SMR" id="A8F8C8"/>
<dbReference type="STRING" id="416591.Tlet_1858"/>
<dbReference type="KEGG" id="tle:Tlet_1858"/>
<dbReference type="eggNOG" id="COG1181">
    <property type="taxonomic scope" value="Bacteria"/>
</dbReference>
<dbReference type="HOGENOM" id="CLU_039268_1_1_0"/>
<dbReference type="OrthoDB" id="9813261at2"/>
<dbReference type="UniPathway" id="UPA00219"/>
<dbReference type="Proteomes" id="UP000002016">
    <property type="component" value="Chromosome"/>
</dbReference>
<dbReference type="GO" id="GO:0005737">
    <property type="term" value="C:cytoplasm"/>
    <property type="evidence" value="ECO:0007669"/>
    <property type="project" value="UniProtKB-SubCell"/>
</dbReference>
<dbReference type="GO" id="GO:0005524">
    <property type="term" value="F:ATP binding"/>
    <property type="evidence" value="ECO:0007669"/>
    <property type="project" value="UniProtKB-KW"/>
</dbReference>
<dbReference type="GO" id="GO:0008716">
    <property type="term" value="F:D-alanine-D-alanine ligase activity"/>
    <property type="evidence" value="ECO:0007669"/>
    <property type="project" value="UniProtKB-UniRule"/>
</dbReference>
<dbReference type="GO" id="GO:0046872">
    <property type="term" value="F:metal ion binding"/>
    <property type="evidence" value="ECO:0007669"/>
    <property type="project" value="UniProtKB-KW"/>
</dbReference>
<dbReference type="GO" id="GO:0071555">
    <property type="term" value="P:cell wall organization"/>
    <property type="evidence" value="ECO:0007669"/>
    <property type="project" value="UniProtKB-KW"/>
</dbReference>
<dbReference type="GO" id="GO:0009252">
    <property type="term" value="P:peptidoglycan biosynthetic process"/>
    <property type="evidence" value="ECO:0007669"/>
    <property type="project" value="UniProtKB-UniRule"/>
</dbReference>
<dbReference type="GO" id="GO:0008360">
    <property type="term" value="P:regulation of cell shape"/>
    <property type="evidence" value="ECO:0007669"/>
    <property type="project" value="UniProtKB-KW"/>
</dbReference>
<dbReference type="Gene3D" id="3.40.50.20">
    <property type="match status" value="1"/>
</dbReference>
<dbReference type="Gene3D" id="3.30.1490.20">
    <property type="entry name" value="ATP-grasp fold, A domain"/>
    <property type="match status" value="1"/>
</dbReference>
<dbReference type="Gene3D" id="3.30.470.20">
    <property type="entry name" value="ATP-grasp fold, B domain"/>
    <property type="match status" value="1"/>
</dbReference>
<dbReference type="HAMAP" id="MF_00047">
    <property type="entry name" value="Dala_Dala_lig"/>
    <property type="match status" value="1"/>
</dbReference>
<dbReference type="InterPro" id="IPR011761">
    <property type="entry name" value="ATP-grasp"/>
</dbReference>
<dbReference type="InterPro" id="IPR013815">
    <property type="entry name" value="ATP_grasp_subdomain_1"/>
</dbReference>
<dbReference type="InterPro" id="IPR000291">
    <property type="entry name" value="D-Ala_lig_Van_CS"/>
</dbReference>
<dbReference type="InterPro" id="IPR005905">
    <property type="entry name" value="D_ala_D_ala"/>
</dbReference>
<dbReference type="InterPro" id="IPR011095">
    <property type="entry name" value="Dala_Dala_lig_C"/>
</dbReference>
<dbReference type="InterPro" id="IPR011127">
    <property type="entry name" value="Dala_Dala_lig_N"/>
</dbReference>
<dbReference type="InterPro" id="IPR016185">
    <property type="entry name" value="PreATP-grasp_dom_sf"/>
</dbReference>
<dbReference type="NCBIfam" id="TIGR01205">
    <property type="entry name" value="D_ala_D_alaTIGR"/>
    <property type="match status" value="1"/>
</dbReference>
<dbReference type="NCBIfam" id="NF002378">
    <property type="entry name" value="PRK01372.1"/>
    <property type="match status" value="1"/>
</dbReference>
<dbReference type="NCBIfam" id="NF011169">
    <property type="entry name" value="PRK14571.1"/>
    <property type="match status" value="1"/>
</dbReference>
<dbReference type="PANTHER" id="PTHR23132">
    <property type="entry name" value="D-ALANINE--D-ALANINE LIGASE"/>
    <property type="match status" value="1"/>
</dbReference>
<dbReference type="PANTHER" id="PTHR23132:SF23">
    <property type="entry name" value="D-ALANINE--D-ALANINE LIGASE B"/>
    <property type="match status" value="1"/>
</dbReference>
<dbReference type="Pfam" id="PF07478">
    <property type="entry name" value="Dala_Dala_lig_C"/>
    <property type="match status" value="1"/>
</dbReference>
<dbReference type="Pfam" id="PF01820">
    <property type="entry name" value="Dala_Dala_lig_N"/>
    <property type="match status" value="2"/>
</dbReference>
<dbReference type="PIRSF" id="PIRSF039102">
    <property type="entry name" value="Ddl/VanB"/>
    <property type="match status" value="1"/>
</dbReference>
<dbReference type="SUPFAM" id="SSF56059">
    <property type="entry name" value="Glutathione synthetase ATP-binding domain-like"/>
    <property type="match status" value="1"/>
</dbReference>
<dbReference type="SUPFAM" id="SSF52440">
    <property type="entry name" value="PreATP-grasp domain"/>
    <property type="match status" value="1"/>
</dbReference>
<dbReference type="PROSITE" id="PS50975">
    <property type="entry name" value="ATP_GRASP"/>
    <property type="match status" value="1"/>
</dbReference>
<dbReference type="PROSITE" id="PS00843">
    <property type="entry name" value="DALA_DALA_LIGASE_1"/>
    <property type="match status" value="1"/>
</dbReference>
<evidence type="ECO:0000250" key="1"/>
<evidence type="ECO:0000255" key="2">
    <source>
        <dbReference type="HAMAP-Rule" id="MF_00047"/>
    </source>
</evidence>
<sequence>MKIAVLLGGISRERPISLKSGENVLKALKKLGHDVVPIDVDENFLEIAPKLKEFEVVFNALHGHFGEDGTVQAILDWVGVSYTGSKVLASAICFDKVMTYRVLDGYVNFPEYTIVKKPVKESPYGFPCVIKPRKEGSSIGVHICDNSNQLYNDLSEELKKYNEMMIQRYIEGRELTVSILEIGKPQILPVLELKPKRRFYDYTAKYVSGMTEFILPAPLSVEEYQKVANSSLRAFELCGCEGFARVDGILKDNVFYVLELNTIPGLTDLSDMPASAKAAGMSFEELVDAIIQTAVR</sequence>